<organism>
    <name type="scientific">Pseudomonas fluorescens (strain SBW25)</name>
    <dbReference type="NCBI Taxonomy" id="216595"/>
    <lineage>
        <taxon>Bacteria</taxon>
        <taxon>Pseudomonadati</taxon>
        <taxon>Pseudomonadota</taxon>
        <taxon>Gammaproteobacteria</taxon>
        <taxon>Pseudomonadales</taxon>
        <taxon>Pseudomonadaceae</taxon>
        <taxon>Pseudomonas</taxon>
    </lineage>
</organism>
<feature type="chain" id="PRO_1000212531" description="Chaperone protein HscA homolog">
    <location>
        <begin position="1"/>
        <end position="620"/>
    </location>
</feature>
<keyword id="KW-0067">ATP-binding</keyword>
<keyword id="KW-0143">Chaperone</keyword>
<keyword id="KW-0547">Nucleotide-binding</keyword>
<name>HSCA_PSEFS</name>
<proteinExistence type="inferred from homology"/>
<reference key="1">
    <citation type="journal article" date="2009" name="Genome Biol.">
        <title>Genomic and genetic analyses of diversity and plant interactions of Pseudomonas fluorescens.</title>
        <authorList>
            <person name="Silby M.W."/>
            <person name="Cerdeno-Tarraga A.M."/>
            <person name="Vernikos G.S."/>
            <person name="Giddens S.R."/>
            <person name="Jackson R.W."/>
            <person name="Preston G.M."/>
            <person name="Zhang X.-X."/>
            <person name="Moon C.D."/>
            <person name="Gehrig S.M."/>
            <person name="Godfrey S.A.C."/>
            <person name="Knight C.G."/>
            <person name="Malone J.G."/>
            <person name="Robinson Z."/>
            <person name="Spiers A.J."/>
            <person name="Harris S."/>
            <person name="Challis G.L."/>
            <person name="Yaxley A.M."/>
            <person name="Harris D."/>
            <person name="Seeger K."/>
            <person name="Murphy L."/>
            <person name="Rutter S."/>
            <person name="Squares R."/>
            <person name="Quail M.A."/>
            <person name="Saunders E."/>
            <person name="Mavromatis K."/>
            <person name="Brettin T.S."/>
            <person name="Bentley S.D."/>
            <person name="Hothersall J."/>
            <person name="Stephens E."/>
            <person name="Thomas C.M."/>
            <person name="Parkhill J."/>
            <person name="Levy S.B."/>
            <person name="Rainey P.B."/>
            <person name="Thomson N.R."/>
        </authorList>
    </citation>
    <scope>NUCLEOTIDE SEQUENCE [LARGE SCALE GENOMIC DNA]</scope>
    <source>
        <strain>SBW25</strain>
    </source>
</reference>
<accession>C3K1M1</accession>
<gene>
    <name evidence="1" type="primary">hscA</name>
    <name type="ordered locus">PFLU_5064</name>
</gene>
<dbReference type="EMBL" id="AM181176">
    <property type="protein sequence ID" value="CAY52058.1"/>
    <property type="molecule type" value="Genomic_DNA"/>
</dbReference>
<dbReference type="RefSeq" id="WP_015885744.1">
    <property type="nucleotide sequence ID" value="NC_012660.1"/>
</dbReference>
<dbReference type="SMR" id="C3K1M1"/>
<dbReference type="STRING" id="294.SRM1_04652"/>
<dbReference type="PATRIC" id="fig|216595.4.peg.5199"/>
<dbReference type="eggNOG" id="COG0443">
    <property type="taxonomic scope" value="Bacteria"/>
</dbReference>
<dbReference type="HOGENOM" id="CLU_005965_2_1_6"/>
<dbReference type="OrthoDB" id="9766019at2"/>
<dbReference type="GO" id="GO:0005524">
    <property type="term" value="F:ATP binding"/>
    <property type="evidence" value="ECO:0007669"/>
    <property type="project" value="UniProtKB-KW"/>
</dbReference>
<dbReference type="GO" id="GO:0016887">
    <property type="term" value="F:ATP hydrolysis activity"/>
    <property type="evidence" value="ECO:0007669"/>
    <property type="project" value="UniProtKB-UniRule"/>
</dbReference>
<dbReference type="GO" id="GO:0140662">
    <property type="term" value="F:ATP-dependent protein folding chaperone"/>
    <property type="evidence" value="ECO:0007669"/>
    <property type="project" value="InterPro"/>
</dbReference>
<dbReference type="GO" id="GO:0051082">
    <property type="term" value="F:unfolded protein binding"/>
    <property type="evidence" value="ECO:0007669"/>
    <property type="project" value="InterPro"/>
</dbReference>
<dbReference type="GO" id="GO:0016226">
    <property type="term" value="P:iron-sulfur cluster assembly"/>
    <property type="evidence" value="ECO:0007669"/>
    <property type="project" value="InterPro"/>
</dbReference>
<dbReference type="CDD" id="cd10236">
    <property type="entry name" value="ASKHA_NBD_HSP70_HscA"/>
    <property type="match status" value="1"/>
</dbReference>
<dbReference type="FunFam" id="3.30.420.40:FF:000046">
    <property type="entry name" value="Chaperone protein HscA"/>
    <property type="match status" value="1"/>
</dbReference>
<dbReference type="FunFam" id="2.60.34.10:FF:000005">
    <property type="entry name" value="Chaperone protein HscA homolog"/>
    <property type="match status" value="1"/>
</dbReference>
<dbReference type="Gene3D" id="1.20.1270.10">
    <property type="match status" value="1"/>
</dbReference>
<dbReference type="Gene3D" id="3.30.420.40">
    <property type="match status" value="2"/>
</dbReference>
<dbReference type="Gene3D" id="3.90.640.10">
    <property type="entry name" value="Actin, Chain A, domain 4"/>
    <property type="match status" value="1"/>
</dbReference>
<dbReference type="Gene3D" id="2.60.34.10">
    <property type="entry name" value="Substrate Binding Domain Of DNAk, Chain A, domain 1"/>
    <property type="match status" value="1"/>
</dbReference>
<dbReference type="HAMAP" id="MF_00679">
    <property type="entry name" value="HscA"/>
    <property type="match status" value="1"/>
</dbReference>
<dbReference type="InterPro" id="IPR043129">
    <property type="entry name" value="ATPase_NBD"/>
</dbReference>
<dbReference type="InterPro" id="IPR018181">
    <property type="entry name" value="Heat_shock_70_CS"/>
</dbReference>
<dbReference type="InterPro" id="IPR042039">
    <property type="entry name" value="HscA_NBD"/>
</dbReference>
<dbReference type="InterPro" id="IPR029048">
    <property type="entry name" value="HSP70_C_sf"/>
</dbReference>
<dbReference type="InterPro" id="IPR029047">
    <property type="entry name" value="HSP70_peptide-bd_sf"/>
</dbReference>
<dbReference type="InterPro" id="IPR013126">
    <property type="entry name" value="Hsp_70_fam"/>
</dbReference>
<dbReference type="InterPro" id="IPR010236">
    <property type="entry name" value="ISC_FeS_clus_asmbl_HscA"/>
</dbReference>
<dbReference type="NCBIfam" id="TIGR01991">
    <property type="entry name" value="HscA"/>
    <property type="match status" value="1"/>
</dbReference>
<dbReference type="NCBIfam" id="NF003520">
    <property type="entry name" value="PRK05183.1"/>
    <property type="match status" value="1"/>
</dbReference>
<dbReference type="PANTHER" id="PTHR19375">
    <property type="entry name" value="HEAT SHOCK PROTEIN 70KDA"/>
    <property type="match status" value="1"/>
</dbReference>
<dbReference type="Pfam" id="PF00012">
    <property type="entry name" value="HSP70"/>
    <property type="match status" value="1"/>
</dbReference>
<dbReference type="PRINTS" id="PR00301">
    <property type="entry name" value="HEATSHOCK70"/>
</dbReference>
<dbReference type="SUPFAM" id="SSF53067">
    <property type="entry name" value="Actin-like ATPase domain"/>
    <property type="match status" value="2"/>
</dbReference>
<dbReference type="SUPFAM" id="SSF100934">
    <property type="entry name" value="Heat shock protein 70kD (HSP70), C-terminal subdomain"/>
    <property type="match status" value="1"/>
</dbReference>
<dbReference type="SUPFAM" id="SSF100920">
    <property type="entry name" value="Heat shock protein 70kD (HSP70), peptide-binding domain"/>
    <property type="match status" value="1"/>
</dbReference>
<dbReference type="PROSITE" id="PS00297">
    <property type="entry name" value="HSP70_1"/>
    <property type="match status" value="1"/>
</dbReference>
<dbReference type="PROSITE" id="PS00329">
    <property type="entry name" value="HSP70_2"/>
    <property type="match status" value="1"/>
</dbReference>
<dbReference type="PROSITE" id="PS01036">
    <property type="entry name" value="HSP70_3"/>
    <property type="match status" value="2"/>
</dbReference>
<protein>
    <recommendedName>
        <fullName evidence="1">Chaperone protein HscA homolog</fullName>
    </recommendedName>
</protein>
<sequence length="620" mass="65937">MALLQIAEPGQSPQPHQRRLAVGIDLGTTNSLVAALRSGLSEPLPDADGQVILPSAVRYHADRTEVGESAKLAASADPLNTVLSVKRLMGRGLSDVKQLGDQLPYRFVGGESHMPFIDTVQGPKSPVEVSADILKVLRQRAETTLGGELVGAVITVPAYFDDAQRQATKDAAKLAGLNVLRLLNEPTAAAVAYGLDQHAEGLVAIYDLGGGTFDISILRLTGGVFEVLATGGDSALGGDDFDHTVAGWIISSAGLSADLDPGAQRNLLQTACAAKEALTDAATVEVSYGTWSAQLTREAFDALIEPMVARSLKACRRAVRDSGVELEDVGAVVMVGGSTRVPRVRDAVAEAFGRQPLTEIDPDQVVAIGAAIQADTLAGNKRDGGELLLLDVIPLSLGLETMGGLMEKVIPRNTTIPVARAQDFTTYKDGQTAMMIHVLQGERELISDCRSLARFELRGIPAMVAGAAKIRVTYQVDADGLLSVAARELASGVEASIQVKPSYGLTDGEIAKMLKDSFQYAGDDKVARVLREQQVDAQRLLEAVQGALDVDGERLLDAEERMVIDLQMQELAELIKGTDGYAIEQQTKRLSQVTDAFAARRMDQSVKAALAGRNLNELEE</sequence>
<comment type="function">
    <text evidence="1">Chaperone involved in the maturation of iron-sulfur cluster-containing proteins. Has a low intrinsic ATPase activity which is markedly stimulated by HscB.</text>
</comment>
<comment type="similarity">
    <text evidence="1">Belongs to the heat shock protein 70 family.</text>
</comment>
<evidence type="ECO:0000255" key="1">
    <source>
        <dbReference type="HAMAP-Rule" id="MF_00679"/>
    </source>
</evidence>